<proteinExistence type="inferred from homology"/>
<comment type="function">
    <text evidence="1">Produces ATP from ADP in the presence of a proton gradient across the membrane.</text>
</comment>
<comment type="subunit">
    <text>F-type ATPases have 2 components, CF(1) - the catalytic core - and CF(0) - the membrane proton channel. CF(1) has five subunits: alpha(3), beta(3), gamma(1), delta(1), epsilon(1). CF(0) has three main subunits: a, b and c.</text>
</comment>
<comment type="subcellular location">
    <subcellularLocation>
        <location evidence="1">Cell membrane</location>
        <topology evidence="1">Peripheral membrane protein</topology>
    </subcellularLocation>
</comment>
<comment type="similarity">
    <text evidence="2">Belongs to the ATPase epsilon chain family.</text>
</comment>
<protein>
    <recommendedName>
        <fullName>ATP synthase epsilon chain</fullName>
    </recommendedName>
    <alternativeName>
        <fullName>ATP synthase F1 sector epsilon subunit</fullName>
    </alternativeName>
    <alternativeName>
        <fullName>F-ATPase epsilon subunit</fullName>
    </alternativeName>
</protein>
<dbReference type="EMBL" id="LT708304">
    <property type="protein sequence ID" value="SIT99946.1"/>
    <property type="molecule type" value="Genomic_DNA"/>
</dbReference>
<dbReference type="RefSeq" id="NP_854997.1">
    <property type="nucleotide sequence ID" value="NC_002945.3"/>
</dbReference>
<dbReference type="RefSeq" id="WP_003406708.1">
    <property type="nucleotide sequence ID" value="NC_002945.4"/>
</dbReference>
<dbReference type="SMR" id="P63663"/>
<dbReference type="KEGG" id="mbo:BQ2027_MB1343"/>
<dbReference type="PATRIC" id="fig|233413.5.peg.1472"/>
<dbReference type="Proteomes" id="UP000001419">
    <property type="component" value="Chromosome"/>
</dbReference>
<dbReference type="GO" id="GO:0005886">
    <property type="term" value="C:plasma membrane"/>
    <property type="evidence" value="ECO:0007669"/>
    <property type="project" value="UniProtKB-SubCell"/>
</dbReference>
<dbReference type="GO" id="GO:0045259">
    <property type="term" value="C:proton-transporting ATP synthase complex"/>
    <property type="evidence" value="ECO:0007669"/>
    <property type="project" value="UniProtKB-KW"/>
</dbReference>
<dbReference type="GO" id="GO:0005524">
    <property type="term" value="F:ATP binding"/>
    <property type="evidence" value="ECO:0007669"/>
    <property type="project" value="UniProtKB-UniRule"/>
</dbReference>
<dbReference type="GO" id="GO:0046933">
    <property type="term" value="F:proton-transporting ATP synthase activity, rotational mechanism"/>
    <property type="evidence" value="ECO:0007669"/>
    <property type="project" value="UniProtKB-UniRule"/>
</dbReference>
<dbReference type="CDD" id="cd12152">
    <property type="entry name" value="F1-ATPase_delta"/>
    <property type="match status" value="1"/>
</dbReference>
<dbReference type="FunFam" id="2.60.15.10:FF:000011">
    <property type="entry name" value="ATP synthase epsilon chain"/>
    <property type="match status" value="1"/>
</dbReference>
<dbReference type="Gene3D" id="2.60.15.10">
    <property type="entry name" value="F0F1 ATP synthase delta/epsilon subunit, N-terminal"/>
    <property type="match status" value="1"/>
</dbReference>
<dbReference type="HAMAP" id="MF_00530">
    <property type="entry name" value="ATP_synth_epsil_bac"/>
    <property type="match status" value="1"/>
</dbReference>
<dbReference type="InterPro" id="IPR001469">
    <property type="entry name" value="ATP_synth_F1_dsu/esu"/>
</dbReference>
<dbReference type="InterPro" id="IPR020546">
    <property type="entry name" value="ATP_synth_F1_dsu/esu_N"/>
</dbReference>
<dbReference type="InterPro" id="IPR036771">
    <property type="entry name" value="ATPsynth_dsu/esu_N"/>
</dbReference>
<dbReference type="NCBIfam" id="TIGR01216">
    <property type="entry name" value="ATP_synt_epsi"/>
    <property type="match status" value="1"/>
</dbReference>
<dbReference type="NCBIfam" id="NF009977">
    <property type="entry name" value="PRK13442.1"/>
    <property type="match status" value="1"/>
</dbReference>
<dbReference type="PANTHER" id="PTHR13822">
    <property type="entry name" value="ATP SYNTHASE DELTA/EPSILON CHAIN"/>
    <property type="match status" value="1"/>
</dbReference>
<dbReference type="PANTHER" id="PTHR13822:SF10">
    <property type="entry name" value="ATP SYNTHASE EPSILON CHAIN, CHLOROPLASTIC"/>
    <property type="match status" value="1"/>
</dbReference>
<dbReference type="Pfam" id="PF02823">
    <property type="entry name" value="ATP-synt_DE_N"/>
    <property type="match status" value="1"/>
</dbReference>
<dbReference type="SUPFAM" id="SSF51344">
    <property type="entry name" value="Epsilon subunit of F1F0-ATP synthase N-terminal domain"/>
    <property type="match status" value="1"/>
</dbReference>
<reference key="1">
    <citation type="journal article" date="2003" name="Proc. Natl. Acad. Sci. U.S.A.">
        <title>The complete genome sequence of Mycobacterium bovis.</title>
        <authorList>
            <person name="Garnier T."/>
            <person name="Eiglmeier K."/>
            <person name="Camus J.-C."/>
            <person name="Medina N."/>
            <person name="Mansoor H."/>
            <person name="Pryor M."/>
            <person name="Duthoy S."/>
            <person name="Grondin S."/>
            <person name="Lacroix C."/>
            <person name="Monsempe C."/>
            <person name="Simon S."/>
            <person name="Harris B."/>
            <person name="Atkin R."/>
            <person name="Doggett J."/>
            <person name="Mayes R."/>
            <person name="Keating L."/>
            <person name="Wheeler P.R."/>
            <person name="Parkhill J."/>
            <person name="Barrell B.G."/>
            <person name="Cole S.T."/>
            <person name="Gordon S.V."/>
            <person name="Hewinson R.G."/>
        </authorList>
    </citation>
    <scope>NUCLEOTIDE SEQUENCE [LARGE SCALE GENOMIC DNA]</scope>
    <source>
        <strain>ATCC BAA-935 / AF2122/97</strain>
    </source>
</reference>
<reference key="2">
    <citation type="journal article" date="2017" name="Genome Announc.">
        <title>Updated reference genome sequence and annotation of Mycobacterium bovis AF2122/97.</title>
        <authorList>
            <person name="Malone K.M."/>
            <person name="Farrell D."/>
            <person name="Stuber T.P."/>
            <person name="Schubert O.T."/>
            <person name="Aebersold R."/>
            <person name="Robbe-Austerman S."/>
            <person name="Gordon S.V."/>
        </authorList>
    </citation>
    <scope>NUCLEOTIDE SEQUENCE [LARGE SCALE GENOMIC DNA]</scope>
    <scope>GENOME REANNOTATION</scope>
    <source>
        <strain>ATCC BAA-935 / AF2122/97</strain>
    </source>
</reference>
<keyword id="KW-0066">ATP synthesis</keyword>
<keyword id="KW-1003">Cell membrane</keyword>
<keyword id="KW-0139">CF(1)</keyword>
<keyword id="KW-0375">Hydrogen ion transport</keyword>
<keyword id="KW-0406">Ion transport</keyword>
<keyword id="KW-0472">Membrane</keyword>
<keyword id="KW-1185">Reference proteome</keyword>
<keyword id="KW-0813">Transport</keyword>
<feature type="chain" id="PRO_0000188158" description="ATP synthase epsilon chain">
    <location>
        <begin position="1"/>
        <end position="121"/>
    </location>
</feature>
<name>ATPE_MYCBO</name>
<accession>P63663</accession>
<accession>A0A1R3XXZ5</accession>
<accession>Q10595</accession>
<accession>X2BHY8</accession>
<evidence type="ECO:0000250" key="1"/>
<evidence type="ECO:0000305" key="2"/>
<sequence>MAELNVEIVAVDRNIWSGTAKFLFTRTTVGEIGILPRHIPLVAQLVDDAMVRVEREGEKDLRIAVDGGFLSVTEEGVSILAESAEFESEIDEAAAKQDSESDDPRIAARGRARLRAVGAID</sequence>
<organism>
    <name type="scientific">Mycobacterium bovis (strain ATCC BAA-935 / AF2122/97)</name>
    <dbReference type="NCBI Taxonomy" id="233413"/>
    <lineage>
        <taxon>Bacteria</taxon>
        <taxon>Bacillati</taxon>
        <taxon>Actinomycetota</taxon>
        <taxon>Actinomycetes</taxon>
        <taxon>Mycobacteriales</taxon>
        <taxon>Mycobacteriaceae</taxon>
        <taxon>Mycobacterium</taxon>
        <taxon>Mycobacterium tuberculosis complex</taxon>
    </lineage>
</organism>
<gene>
    <name type="primary">atpC</name>
    <name type="ordered locus">BQ2027_MB1343</name>
</gene>